<dbReference type="EC" id="2.3.1.74" evidence="2"/>
<dbReference type="EMBL" id="AM263199">
    <property type="protein sequence ID" value="CAK19317.1"/>
    <property type="molecule type" value="Genomic_DNA"/>
</dbReference>
<dbReference type="SMR" id="A0AMG7"/>
<dbReference type="BRENDA" id="2.3.1.74">
    <property type="organism ID" value="2716"/>
</dbReference>
<dbReference type="UniPathway" id="UPA00154"/>
<dbReference type="GO" id="GO:0005737">
    <property type="term" value="C:cytoplasm"/>
    <property type="evidence" value="ECO:0007669"/>
    <property type="project" value="UniProtKB-SubCell"/>
</dbReference>
<dbReference type="GO" id="GO:0016210">
    <property type="term" value="F:naringenin-chalcone synthase activity"/>
    <property type="evidence" value="ECO:0007669"/>
    <property type="project" value="UniProtKB-EC"/>
</dbReference>
<dbReference type="GO" id="GO:0009813">
    <property type="term" value="P:flavonoid biosynthetic process"/>
    <property type="evidence" value="ECO:0007669"/>
    <property type="project" value="UniProtKB-UniPathway"/>
</dbReference>
<dbReference type="GO" id="GO:0030639">
    <property type="term" value="P:polyketide biosynthetic process"/>
    <property type="evidence" value="ECO:0007669"/>
    <property type="project" value="TreeGrafter"/>
</dbReference>
<dbReference type="CDD" id="cd00831">
    <property type="entry name" value="CHS_like"/>
    <property type="match status" value="1"/>
</dbReference>
<dbReference type="FunFam" id="3.40.47.10:FF:000014">
    <property type="entry name" value="Chalcone synthase 1"/>
    <property type="match status" value="1"/>
</dbReference>
<dbReference type="FunFam" id="3.40.47.10:FF:000025">
    <property type="entry name" value="Chalcone synthase 2"/>
    <property type="match status" value="1"/>
</dbReference>
<dbReference type="Gene3D" id="3.40.47.10">
    <property type="match status" value="2"/>
</dbReference>
<dbReference type="InterPro" id="IPR012328">
    <property type="entry name" value="Chalcone/stilbene_synt_C"/>
</dbReference>
<dbReference type="InterPro" id="IPR001099">
    <property type="entry name" value="Chalcone/stilbene_synt_N"/>
</dbReference>
<dbReference type="InterPro" id="IPR018088">
    <property type="entry name" value="Chalcone/stilbene_synthase_AS"/>
</dbReference>
<dbReference type="InterPro" id="IPR011141">
    <property type="entry name" value="Polyketide_synthase_type-III"/>
</dbReference>
<dbReference type="InterPro" id="IPR016039">
    <property type="entry name" value="Thiolase-like"/>
</dbReference>
<dbReference type="PANTHER" id="PTHR11877:SF80">
    <property type="entry name" value="CHALCONE SYNTHASE 1"/>
    <property type="match status" value="1"/>
</dbReference>
<dbReference type="PANTHER" id="PTHR11877">
    <property type="entry name" value="HYDROXYMETHYLGLUTARYL-COA SYNTHASE"/>
    <property type="match status" value="1"/>
</dbReference>
<dbReference type="Pfam" id="PF02797">
    <property type="entry name" value="Chal_sti_synt_C"/>
    <property type="match status" value="1"/>
</dbReference>
<dbReference type="Pfam" id="PF00195">
    <property type="entry name" value="Chal_sti_synt_N"/>
    <property type="match status" value="1"/>
</dbReference>
<dbReference type="PIRSF" id="PIRSF000451">
    <property type="entry name" value="PKS_III"/>
    <property type="match status" value="1"/>
</dbReference>
<dbReference type="SUPFAM" id="SSF53901">
    <property type="entry name" value="Thiolase-like"/>
    <property type="match status" value="2"/>
</dbReference>
<dbReference type="PROSITE" id="PS00441">
    <property type="entry name" value="CHALCONE_SYNTH"/>
    <property type="match status" value="1"/>
</dbReference>
<feature type="chain" id="PRO_0000452941" description="Chalcone synthase H2">
    <location>
        <begin position="1"/>
        <end position="389"/>
    </location>
</feature>
<feature type="active site" evidence="2">
    <location>
        <position position="164"/>
    </location>
</feature>
<evidence type="ECO:0000250" key="1">
    <source>
        <dbReference type="UniProtKB" id="Q9FEY5"/>
    </source>
</evidence>
<evidence type="ECO:0000255" key="2">
    <source>
        <dbReference type="PROSITE-ProRule" id="PRU10023"/>
    </source>
</evidence>
<evidence type="ECO:0000303" key="3">
    <source>
    </source>
</evidence>
<evidence type="ECO:0000305" key="4"/>
<evidence type="ECO:0000305" key="5">
    <source>
    </source>
</evidence>
<gene>
    <name evidence="3" type="primary">chs_H1-1539</name>
</gene>
<proteinExistence type="inferred from homology"/>
<organism>
    <name type="scientific">Humulus lupulus</name>
    <name type="common">European hop</name>
    <dbReference type="NCBI Taxonomy" id="3486"/>
    <lineage>
        <taxon>Eukaryota</taxon>
        <taxon>Viridiplantae</taxon>
        <taxon>Streptophyta</taxon>
        <taxon>Embryophyta</taxon>
        <taxon>Tracheophyta</taxon>
        <taxon>Spermatophyta</taxon>
        <taxon>Magnoliopsida</taxon>
        <taxon>eudicotyledons</taxon>
        <taxon>Gunneridae</taxon>
        <taxon>Pentapetalae</taxon>
        <taxon>rosids</taxon>
        <taxon>fabids</taxon>
        <taxon>Rosales</taxon>
        <taxon>Cannabaceae</taxon>
        <taxon>Humulus</taxon>
    </lineage>
</organism>
<accession>A0AMG7</accession>
<keyword id="KW-0012">Acyltransferase</keyword>
<keyword id="KW-0963">Cytoplasm</keyword>
<keyword id="KW-0284">Flavonoid biosynthesis</keyword>
<keyword id="KW-0808">Transferase</keyword>
<protein>
    <recommendedName>
        <fullName evidence="4">Chalcone synthase H2</fullName>
        <shortName evidence="3">CHS_H1-1539</shortName>
        <ecNumber evidence="2">2.3.1.74</ecNumber>
    </recommendedName>
    <alternativeName>
        <fullName evidence="3">Naringenin-chalcone synthase CHS_H1-1539</fullName>
    </alternativeName>
</protein>
<sequence>MVTVEEVRKAQRAEGPATILAIGTATPANCILQSEYPDYYFRITNSEHKTELKEKFKRMCDKSMIRKRYMHLTEEILKENPNLCAYEAPSLDARQDMVVVEVPKLGKEAATKAIKEWGQPKSKITHVVFCTTSGVDMPGADYQLTKLLGLRPSVKRLMMYQQGCFAGGTVLRVAKDLAENNKGARVLVVCSEITAVTFRGPNDTHLDSLVGQALFGDGSAALIIGADPIPEIEKPTFELVSAAQTILPDSDGAIDGHLREVGLTFHLLKDVPGLISKNIEKSLVEAFKPLGISDWNSLFWIAHPGGPAILDQVESKLALKPEKLRATRHVLGEYGNMSSACVLFILDEMRRKCAEDGLKTTGEGLEWGVLFGFGPGLTVETVVLHSVGI</sequence>
<name>CHSH2_HUMLU</name>
<comment type="function">
    <text evidence="1 5">Involved in the biosynthesis of prenylated phenolics natural products which contribute to the bitter taste of beer and display broad biological activities (Probable). Chalcone synthase that can use 4-coumaroyl-CoA to produce 4,2',4',6'-tetrahydroxychalcone (also termed naringenin-chalcone or chalcone) which can, under specific conditions, spontaneously isomerize into naringenin (By similarity).</text>
</comment>
<comment type="catalytic activity">
    <reaction evidence="2">
        <text>(E)-4-coumaroyl-CoA + 3 malonyl-CoA + 3 H(+) = 2',4,4',6'-tetrahydroxychalcone + 3 CO2 + 4 CoA</text>
        <dbReference type="Rhea" id="RHEA:11128"/>
        <dbReference type="ChEBI" id="CHEBI:15378"/>
        <dbReference type="ChEBI" id="CHEBI:15413"/>
        <dbReference type="ChEBI" id="CHEBI:16526"/>
        <dbReference type="ChEBI" id="CHEBI:57287"/>
        <dbReference type="ChEBI" id="CHEBI:57384"/>
        <dbReference type="ChEBI" id="CHEBI:85008"/>
        <dbReference type="EC" id="2.3.1.74"/>
    </reaction>
</comment>
<comment type="pathway">
    <text evidence="5">Secondary metabolite biosynthesis; flavonoid biosynthesis.</text>
</comment>
<comment type="subcellular location">
    <subcellularLocation>
        <location evidence="1">Cytoplasm</location>
    </subcellularLocation>
</comment>
<comment type="similarity">
    <text evidence="4">Belongs to the thiolase-like superfamily. Chalcone/stilbene synthases family.</text>
</comment>
<reference key="1">
    <citation type="journal article" date="2006" name="J. Agric. Food Chem.">
        <title>Sequence analysis of a 'true' chalcone synthase (chs_H1) oligofamily from hop (Humulus lupulus L.) and PAP1 activation of chs_H1 in heterologous systems.</title>
        <authorList>
            <person name="Matousek J."/>
            <person name="Vrba L."/>
            <person name="Skopek J."/>
            <person name="Orctova L."/>
            <person name="Pesina K."/>
            <person name="Heyerick A."/>
            <person name="Baulcombe D."/>
            <person name="De Keukeleire D."/>
        </authorList>
    </citation>
    <scope>NUCLEOTIDE SEQUENCE [GENOMIC DNA]</scope>
    <scope>GENE FAMILY</scope>
    <source>
        <strain>cv. Osvals's 72</strain>
        <tissue>Leaf</tissue>
    </source>
</reference>
<reference key="2">
    <citation type="journal article" date="2019" name="Nat. Prod. Rep.">
        <title>Non-volatile natural products in plant glandular trichomes: chemistry, biological activities and biosynthesis.</title>
        <authorList>
            <person name="Liu Y."/>
            <person name="Jing S.-X."/>
            <person name="Luo S.-H."/>
            <person name="Li S.-H."/>
        </authorList>
    </citation>
    <scope>PATHWAY</scope>
    <scope>REVIEW</scope>
</reference>